<keyword id="KW-0028">Amino-acid biosynthesis</keyword>
<keyword id="KW-0100">Branched-chain amino acid biosynthesis</keyword>
<keyword id="KW-0432">Leucine biosynthesis</keyword>
<keyword id="KW-0456">Lyase</keyword>
<keyword id="KW-1185">Reference proteome</keyword>
<proteinExistence type="inferred from homology"/>
<name>LEUD_MYCLE</name>
<evidence type="ECO:0000250" key="1"/>
<evidence type="ECO:0000305" key="2"/>
<gene>
    <name type="primary">leuD</name>
    <name type="ordered locus">ML1684</name>
    <name type="ORF">MLCB637.33</name>
</gene>
<dbReference type="EC" id="4.2.1.33"/>
<dbReference type="EMBL" id="Z99263">
    <property type="protein sequence ID" value="CAB16448.1"/>
    <property type="molecule type" value="Genomic_DNA"/>
</dbReference>
<dbReference type="EMBL" id="AL583923">
    <property type="protein sequence ID" value="CAC30637.1"/>
    <property type="molecule type" value="Genomic_DNA"/>
</dbReference>
<dbReference type="PIR" id="T45426">
    <property type="entry name" value="T45426"/>
</dbReference>
<dbReference type="RefSeq" id="NP_302158.1">
    <property type="nucleotide sequence ID" value="NC_002677.1"/>
</dbReference>
<dbReference type="RefSeq" id="WP_010908479.1">
    <property type="nucleotide sequence ID" value="NC_002677.1"/>
</dbReference>
<dbReference type="SMR" id="O33124"/>
<dbReference type="STRING" id="272631.gene:17575527"/>
<dbReference type="KEGG" id="mle:ML1684"/>
<dbReference type="PATRIC" id="fig|272631.5.peg.3176"/>
<dbReference type="Leproma" id="ML1684"/>
<dbReference type="eggNOG" id="COG0066">
    <property type="taxonomic scope" value="Bacteria"/>
</dbReference>
<dbReference type="HOGENOM" id="CLU_081378_0_1_11"/>
<dbReference type="OrthoDB" id="9777465at2"/>
<dbReference type="UniPathway" id="UPA00048">
    <property type="reaction ID" value="UER00071"/>
</dbReference>
<dbReference type="Proteomes" id="UP000000806">
    <property type="component" value="Chromosome"/>
</dbReference>
<dbReference type="GO" id="GO:0009316">
    <property type="term" value="C:3-isopropylmalate dehydratase complex"/>
    <property type="evidence" value="ECO:0007669"/>
    <property type="project" value="InterPro"/>
</dbReference>
<dbReference type="GO" id="GO:0003861">
    <property type="term" value="F:3-isopropylmalate dehydratase activity"/>
    <property type="evidence" value="ECO:0007669"/>
    <property type="project" value="UniProtKB-UniRule"/>
</dbReference>
<dbReference type="GO" id="GO:0009098">
    <property type="term" value="P:L-leucine biosynthetic process"/>
    <property type="evidence" value="ECO:0007669"/>
    <property type="project" value="UniProtKB-UniRule"/>
</dbReference>
<dbReference type="CDD" id="cd01577">
    <property type="entry name" value="IPMI_Swivel"/>
    <property type="match status" value="1"/>
</dbReference>
<dbReference type="FunFam" id="3.20.19.10:FF:000003">
    <property type="entry name" value="3-isopropylmalate dehydratase small subunit"/>
    <property type="match status" value="1"/>
</dbReference>
<dbReference type="Gene3D" id="3.20.19.10">
    <property type="entry name" value="Aconitase, domain 4"/>
    <property type="match status" value="1"/>
</dbReference>
<dbReference type="HAMAP" id="MF_01031">
    <property type="entry name" value="LeuD_type1"/>
    <property type="match status" value="1"/>
</dbReference>
<dbReference type="InterPro" id="IPR004431">
    <property type="entry name" value="3-IsopropMal_deHydase_ssu"/>
</dbReference>
<dbReference type="InterPro" id="IPR015928">
    <property type="entry name" value="Aconitase/3IPM_dehydase_swvl"/>
</dbReference>
<dbReference type="InterPro" id="IPR000573">
    <property type="entry name" value="AconitaseA/IPMdHydase_ssu_swvl"/>
</dbReference>
<dbReference type="InterPro" id="IPR033940">
    <property type="entry name" value="IPMI_Swivel"/>
</dbReference>
<dbReference type="InterPro" id="IPR050075">
    <property type="entry name" value="LeuD"/>
</dbReference>
<dbReference type="NCBIfam" id="TIGR00171">
    <property type="entry name" value="leuD"/>
    <property type="match status" value="1"/>
</dbReference>
<dbReference type="NCBIfam" id="NF002458">
    <property type="entry name" value="PRK01641.1"/>
    <property type="match status" value="1"/>
</dbReference>
<dbReference type="PANTHER" id="PTHR43345:SF5">
    <property type="entry name" value="3-ISOPROPYLMALATE DEHYDRATASE SMALL SUBUNIT"/>
    <property type="match status" value="1"/>
</dbReference>
<dbReference type="PANTHER" id="PTHR43345">
    <property type="entry name" value="3-ISOPROPYLMALATE DEHYDRATASE SMALL SUBUNIT 2-RELATED-RELATED"/>
    <property type="match status" value="1"/>
</dbReference>
<dbReference type="Pfam" id="PF00694">
    <property type="entry name" value="Aconitase_C"/>
    <property type="match status" value="1"/>
</dbReference>
<dbReference type="SUPFAM" id="SSF52016">
    <property type="entry name" value="LeuD/IlvD-like"/>
    <property type="match status" value="1"/>
</dbReference>
<organism>
    <name type="scientific">Mycobacterium leprae (strain TN)</name>
    <dbReference type="NCBI Taxonomy" id="272631"/>
    <lineage>
        <taxon>Bacteria</taxon>
        <taxon>Bacillati</taxon>
        <taxon>Actinomycetota</taxon>
        <taxon>Actinomycetes</taxon>
        <taxon>Mycobacteriales</taxon>
        <taxon>Mycobacteriaceae</taxon>
        <taxon>Mycobacterium</taxon>
    </lineage>
</organism>
<accession>O33124</accession>
<comment type="function">
    <text evidence="1">Catalyzes the isomerization between 2-isopropylmalate and 3-isopropylmalate, via the formation of 2-isopropylmaleate.</text>
</comment>
<comment type="catalytic activity">
    <reaction>
        <text>(2R,3S)-3-isopropylmalate = (2S)-2-isopropylmalate</text>
        <dbReference type="Rhea" id="RHEA:32287"/>
        <dbReference type="ChEBI" id="CHEBI:1178"/>
        <dbReference type="ChEBI" id="CHEBI:35121"/>
        <dbReference type="EC" id="4.2.1.33"/>
    </reaction>
</comment>
<comment type="pathway">
    <text>Amino-acid biosynthesis; L-leucine biosynthesis; L-leucine from 3-methyl-2-oxobutanoate: step 2/4.</text>
</comment>
<comment type="subunit">
    <text evidence="1">Heterodimer of LeuC and LeuD.</text>
</comment>
<comment type="similarity">
    <text evidence="2">Belongs to the LeuD family. LeuD type 1 subfamily.</text>
</comment>
<protein>
    <recommendedName>
        <fullName>3-isopropylmalate dehydratase small subunit</fullName>
        <ecNumber>4.2.1.33</ecNumber>
    </recommendedName>
    <alternativeName>
        <fullName>Alpha-IPM isomerase</fullName>
        <shortName>IPMI</shortName>
    </alternativeName>
    <alternativeName>
        <fullName>Isopropylmalate isomerase</fullName>
    </alternativeName>
</protein>
<reference key="1">
    <citation type="journal article" date="2001" name="Nature">
        <title>Massive gene decay in the leprosy bacillus.</title>
        <authorList>
            <person name="Cole S.T."/>
            <person name="Eiglmeier K."/>
            <person name="Parkhill J."/>
            <person name="James K.D."/>
            <person name="Thomson N.R."/>
            <person name="Wheeler P.R."/>
            <person name="Honore N."/>
            <person name="Garnier T."/>
            <person name="Churcher C.M."/>
            <person name="Harris D.E."/>
            <person name="Mungall K.L."/>
            <person name="Basham D."/>
            <person name="Brown D."/>
            <person name="Chillingworth T."/>
            <person name="Connor R."/>
            <person name="Davies R.M."/>
            <person name="Devlin K."/>
            <person name="Duthoy S."/>
            <person name="Feltwell T."/>
            <person name="Fraser A."/>
            <person name="Hamlin N."/>
            <person name="Holroyd S."/>
            <person name="Hornsby T."/>
            <person name="Jagels K."/>
            <person name="Lacroix C."/>
            <person name="Maclean J."/>
            <person name="Moule S."/>
            <person name="Murphy L.D."/>
            <person name="Oliver K."/>
            <person name="Quail M.A."/>
            <person name="Rajandream M.A."/>
            <person name="Rutherford K.M."/>
            <person name="Rutter S."/>
            <person name="Seeger K."/>
            <person name="Simon S."/>
            <person name="Simmonds M."/>
            <person name="Skelton J."/>
            <person name="Squares R."/>
            <person name="Squares S."/>
            <person name="Stevens K."/>
            <person name="Taylor K."/>
            <person name="Whitehead S."/>
            <person name="Woodward J.R."/>
            <person name="Barrell B.G."/>
        </authorList>
    </citation>
    <scope>NUCLEOTIDE SEQUENCE [LARGE SCALE GENOMIC DNA]</scope>
    <source>
        <strain>TN</strain>
    </source>
</reference>
<feature type="chain" id="PRO_0000141838" description="3-isopropylmalate dehydratase small subunit">
    <location>
        <begin position="1"/>
        <end position="198"/>
    </location>
</feature>
<sequence>MQAFRVHTGIGVPLRRSNVDTDQIIPAVFLKRVTRNGFEDGLFATWRVDPSFVLNLSPFDRGSVLVVGPDFGIGSSREHAVWALMDYGFRVVISSRFGDIFHGNAGKAGLLAAQVAQDDVEFLWKLIEQKPGLEITVNLQDRNINAATVVLPFKIDDYTAWRLLEGLDDIALNLRKLDEIEAFESARPAWKPRTLPTT</sequence>